<feature type="signal peptide" evidence="1">
    <location>
        <begin position="1"/>
        <end position="25"/>
    </location>
</feature>
<feature type="chain" id="PRO_0000031741" description="Multiple sugar-binding periplasmic receptor ChvE">
    <location>
        <begin position="26"/>
        <end position="354"/>
    </location>
</feature>
<protein>
    <recommendedName>
        <fullName>Multiple sugar-binding periplasmic receptor ChvE</fullName>
    </recommendedName>
</protein>
<proteinExistence type="inferred from homology"/>
<name>CHVE_RHIRD</name>
<accession>P54082</accession>
<comment type="function">
    <text>Required for effective transcriptional induction of the vir genes by monosaccharides in response to plant signals and for normal growth and chemotaxis towards certain sugars. Functions as a periplasmic multiple sugar-binding receptor protein. It does not interact with a transport system.</text>
</comment>
<comment type="subcellular location">
    <subcellularLocation>
        <location>Periplasm</location>
    </subcellularLocation>
</comment>
<comment type="similarity">
    <text evidence="2">Belongs to the bacterial solute-binding protein 2 family.</text>
</comment>
<reference key="1">
    <citation type="submission" date="1996-04" db="EMBL/GenBank/DDBJ databases">
        <authorList>
            <person name="Belanger C."/>
            <person name="Loubens I."/>
            <person name="Nester E.W."/>
            <person name="Dion P."/>
        </authorList>
    </citation>
    <scope>NUCLEOTIDE SEQUENCE [GENOMIC DNA]</scope>
    <source>
        <strain>D10B/87</strain>
    </source>
</reference>
<dbReference type="EMBL" id="X97456">
    <property type="protein sequence ID" value="CAA66110.1"/>
    <property type="molecule type" value="Genomic_DNA"/>
</dbReference>
<dbReference type="SMR" id="P54082"/>
<dbReference type="OMA" id="FQTIADQ"/>
<dbReference type="GO" id="GO:0030288">
    <property type="term" value="C:outer membrane-bounded periplasmic space"/>
    <property type="evidence" value="ECO:0007669"/>
    <property type="project" value="TreeGrafter"/>
</dbReference>
<dbReference type="GO" id="GO:0030246">
    <property type="term" value="F:carbohydrate binding"/>
    <property type="evidence" value="ECO:0007669"/>
    <property type="project" value="TreeGrafter"/>
</dbReference>
<dbReference type="GO" id="GO:0006935">
    <property type="term" value="P:chemotaxis"/>
    <property type="evidence" value="ECO:0007669"/>
    <property type="project" value="UniProtKB-KW"/>
</dbReference>
<dbReference type="CDD" id="cd19994">
    <property type="entry name" value="PBP1_ChvE"/>
    <property type="match status" value="1"/>
</dbReference>
<dbReference type="Gene3D" id="3.40.50.2300">
    <property type="match status" value="2"/>
</dbReference>
<dbReference type="InterPro" id="IPR050555">
    <property type="entry name" value="Bact_Solute-Bind_Prot2"/>
</dbReference>
<dbReference type="InterPro" id="IPR049784">
    <property type="entry name" value="ChvE-like"/>
</dbReference>
<dbReference type="InterPro" id="IPR028082">
    <property type="entry name" value="Peripla_BP_I"/>
</dbReference>
<dbReference type="InterPro" id="IPR025997">
    <property type="entry name" value="SBP_2_dom"/>
</dbReference>
<dbReference type="NCBIfam" id="NF040907">
    <property type="entry name" value="ChvE"/>
    <property type="match status" value="1"/>
</dbReference>
<dbReference type="PANTHER" id="PTHR30036">
    <property type="entry name" value="D-XYLOSE-BINDING PERIPLASMIC PROTEIN"/>
    <property type="match status" value="1"/>
</dbReference>
<dbReference type="PANTHER" id="PTHR30036:SF1">
    <property type="entry name" value="D-XYLOSE-BINDING PERIPLASMIC PROTEIN"/>
    <property type="match status" value="1"/>
</dbReference>
<dbReference type="Pfam" id="PF13407">
    <property type="entry name" value="Peripla_BP_4"/>
    <property type="match status" value="1"/>
</dbReference>
<dbReference type="SUPFAM" id="SSF53822">
    <property type="entry name" value="Periplasmic binding protein-like I"/>
    <property type="match status" value="1"/>
</dbReference>
<organism>
    <name type="scientific">Rhizobium radiobacter</name>
    <name type="common">Agrobacterium tumefaciens</name>
    <name type="synonym">Agrobacterium radiobacter</name>
    <dbReference type="NCBI Taxonomy" id="358"/>
    <lineage>
        <taxon>Bacteria</taxon>
        <taxon>Pseudomonadati</taxon>
        <taxon>Pseudomonadota</taxon>
        <taxon>Alphaproteobacteria</taxon>
        <taxon>Hyphomicrobiales</taxon>
        <taxon>Rhizobiaceae</taxon>
        <taxon>Rhizobium/Agrobacterium group</taxon>
        <taxon>Agrobacterium</taxon>
        <taxon>Agrobacterium tumefaciens complex</taxon>
    </lineage>
</organism>
<keyword id="KW-0145">Chemotaxis</keyword>
<keyword id="KW-0192">Crown gall tumor</keyword>
<keyword id="KW-0574">Periplasm</keyword>
<keyword id="KW-0732">Signal</keyword>
<gene>
    <name type="primary">chvE</name>
</gene>
<sequence>MKSIISLTAAAAIGVAMFVAPAFAADKGTVGIAMPTKASARWIDDGNNIVKQLQAAGYGTDLQYGDDDIPNQLSQVENMVTKGDKVLVIAAIDGTTLSDVLQKAHDAGIKVIAYDRLIRNSGNVDYYATFDNFKVGVLQANSIVDGLGLKDGKGPFNIELFGGSPDDNNAFFFYDGAMSVLKPYIDSGKLVVKSGQQGMDKVGTLRWDPATAQARMDNLLSAYYTDAHVDAVLSPYDGLSIGILSSLKGVGYGTGGQKLPIVTGQDSEIPSVKSIIAGEQHSTIFKDTRDLAKVTVDMVNALMEGKTPEVTDTKTYDNGVKVVPSYLLTPVAVDKTNYEKVLVEGGYYKADQLK</sequence>
<evidence type="ECO:0000255" key="1"/>
<evidence type="ECO:0000305" key="2"/>